<proteinExistence type="inferred from homology"/>
<name>LEXA_BACLD</name>
<keyword id="KW-0068">Autocatalytic cleavage</keyword>
<keyword id="KW-0227">DNA damage</keyword>
<keyword id="KW-0234">DNA repair</keyword>
<keyword id="KW-0235">DNA replication</keyword>
<keyword id="KW-0238">DNA-binding</keyword>
<keyword id="KW-0378">Hydrolase</keyword>
<keyword id="KW-1185">Reference proteome</keyword>
<keyword id="KW-0678">Repressor</keyword>
<keyword id="KW-0742">SOS response</keyword>
<keyword id="KW-0804">Transcription</keyword>
<keyword id="KW-0805">Transcription regulation</keyword>
<gene>
    <name evidence="1" type="primary">lexA</name>
    <name type="ordered locus">BLi02032</name>
    <name type="ordered locus">BL00127</name>
</gene>
<evidence type="ECO:0000255" key="1">
    <source>
        <dbReference type="HAMAP-Rule" id="MF_00015"/>
    </source>
</evidence>
<protein>
    <recommendedName>
        <fullName evidence="1">LexA repressor</fullName>
        <ecNumber evidence="1">3.4.21.88</ecNumber>
    </recommendedName>
</protein>
<organism>
    <name type="scientific">Bacillus licheniformis (strain ATCC 14580 / DSM 13 / JCM 2505 / CCUG 7422 / NBRC 12200 / NCIMB 9375 / NCTC 10341 / NRRL NRS-1264 / Gibson 46)</name>
    <dbReference type="NCBI Taxonomy" id="279010"/>
    <lineage>
        <taxon>Bacteria</taxon>
        <taxon>Bacillati</taxon>
        <taxon>Bacillota</taxon>
        <taxon>Bacilli</taxon>
        <taxon>Bacillales</taxon>
        <taxon>Bacillaceae</taxon>
        <taxon>Bacillus</taxon>
    </lineage>
</organism>
<sequence length="207" mass="23264">MTKLSKRQLDILRFIKEEVKRKGYPPSVREIGEAVGLASSSTVHGHLARLETKGLIRRDPTKPRAIEILDTEEEIHIPKNQVVNVPVIGKVTAGTPITAVENIEEYFPLPERLAPPDEHVFMLEIMGESMIDAGILDQDYVIVKQQNTANNGDIVVAMTEDDEATVKRFFKEETHIRLQPENPTMEPIILQNVTILGKVIGVFRTVH</sequence>
<comment type="function">
    <text evidence="1">Represses a number of genes involved in the response to DNA damage (SOS response), including recA and lexA. In the presence of single-stranded DNA, RecA interacts with LexA causing an autocatalytic cleavage which disrupts the DNA-binding part of LexA, leading to derepression of the SOS regulon and eventually DNA repair.</text>
</comment>
<comment type="catalytic activity">
    <reaction evidence="1">
        <text>Hydrolysis of Ala-|-Gly bond in repressor LexA.</text>
        <dbReference type="EC" id="3.4.21.88"/>
    </reaction>
</comment>
<comment type="subunit">
    <text evidence="1">Homodimer.</text>
</comment>
<comment type="similarity">
    <text evidence="1">Belongs to the peptidase S24 family.</text>
</comment>
<feature type="chain" id="PRO_0000170008" description="LexA repressor">
    <location>
        <begin position="1"/>
        <end position="207"/>
    </location>
</feature>
<feature type="DNA-binding region" description="H-T-H motif" evidence="1">
    <location>
        <begin position="28"/>
        <end position="48"/>
    </location>
</feature>
<feature type="active site" description="For autocatalytic cleavage activity" evidence="1">
    <location>
        <position position="129"/>
    </location>
</feature>
<feature type="active site" description="For autocatalytic cleavage activity" evidence="1">
    <location>
        <position position="167"/>
    </location>
</feature>
<feature type="site" description="Cleavage; by autolysis" evidence="1">
    <location>
        <begin position="93"/>
        <end position="94"/>
    </location>
</feature>
<reference key="1">
    <citation type="journal article" date="2004" name="J. Mol. Microbiol. Biotechnol.">
        <title>The complete genome sequence of Bacillus licheniformis DSM13, an organism with great industrial potential.</title>
        <authorList>
            <person name="Veith B."/>
            <person name="Herzberg C."/>
            <person name="Steckel S."/>
            <person name="Feesche J."/>
            <person name="Maurer K.H."/>
            <person name="Ehrenreich P."/>
            <person name="Baeumer S."/>
            <person name="Henne A."/>
            <person name="Liesegang H."/>
            <person name="Merkl R."/>
            <person name="Ehrenreich A."/>
            <person name="Gottschalk G."/>
        </authorList>
    </citation>
    <scope>NUCLEOTIDE SEQUENCE [LARGE SCALE GENOMIC DNA]</scope>
    <source>
        <strain>ATCC 14580 / DSM 13 / JCM 2505 / CCUG 7422 / NBRC 12200 / NCIMB 9375 / NCTC 10341 / NRRL NRS-1264 / Gibson 46</strain>
    </source>
</reference>
<reference key="2">
    <citation type="journal article" date="2004" name="Genome Biol.">
        <title>Complete genome sequence of the industrial bacterium Bacillus licheniformis and comparisons with closely related Bacillus species.</title>
        <authorList>
            <person name="Rey M.W."/>
            <person name="Ramaiya P."/>
            <person name="Nelson B.A."/>
            <person name="Brody-Karpin S.D."/>
            <person name="Zaretsky E.J."/>
            <person name="Tang M."/>
            <person name="Lopez de Leon A."/>
            <person name="Xiang H."/>
            <person name="Gusti V."/>
            <person name="Clausen I.G."/>
            <person name="Olsen P.B."/>
            <person name="Rasmussen M.D."/>
            <person name="Andersen J.T."/>
            <person name="Joergensen P.L."/>
            <person name="Larsen T.S."/>
            <person name="Sorokin A."/>
            <person name="Bolotin A."/>
            <person name="Lapidus A."/>
            <person name="Galleron N."/>
            <person name="Ehrlich S.D."/>
            <person name="Berka R.M."/>
        </authorList>
    </citation>
    <scope>NUCLEOTIDE SEQUENCE [LARGE SCALE GENOMIC DNA]</scope>
    <source>
        <strain>ATCC 14580 / DSM 13 / JCM 2505 / CCUG 7422 / NBRC 12200 / NCIMB 9375 / NCTC 10341 / NRRL NRS-1264 / Gibson 46</strain>
    </source>
</reference>
<dbReference type="EC" id="3.4.21.88" evidence="1"/>
<dbReference type="EMBL" id="AE017333">
    <property type="protein sequence ID" value="AAU40922.3"/>
    <property type="molecule type" value="Genomic_DNA"/>
</dbReference>
<dbReference type="EMBL" id="CP000002">
    <property type="protein sequence ID" value="AAU23560.1"/>
    <property type="molecule type" value="Genomic_DNA"/>
</dbReference>
<dbReference type="RefSeq" id="WP_003182222.1">
    <property type="nucleotide sequence ID" value="NC_006322.1"/>
</dbReference>
<dbReference type="SMR" id="Q65J42"/>
<dbReference type="STRING" id="279010.BL00127"/>
<dbReference type="MEROPS" id="S24.001"/>
<dbReference type="GeneID" id="92861377"/>
<dbReference type="KEGG" id="bld:BLi02032"/>
<dbReference type="KEGG" id="bli:BL00127"/>
<dbReference type="eggNOG" id="COG1974">
    <property type="taxonomic scope" value="Bacteria"/>
</dbReference>
<dbReference type="HOGENOM" id="CLU_066192_45_1_9"/>
<dbReference type="Proteomes" id="UP000000606">
    <property type="component" value="Chromosome"/>
</dbReference>
<dbReference type="GO" id="GO:0003677">
    <property type="term" value="F:DNA binding"/>
    <property type="evidence" value="ECO:0007669"/>
    <property type="project" value="UniProtKB-UniRule"/>
</dbReference>
<dbReference type="GO" id="GO:0004252">
    <property type="term" value="F:serine-type endopeptidase activity"/>
    <property type="evidence" value="ECO:0007669"/>
    <property type="project" value="UniProtKB-UniRule"/>
</dbReference>
<dbReference type="GO" id="GO:0006281">
    <property type="term" value="P:DNA repair"/>
    <property type="evidence" value="ECO:0007669"/>
    <property type="project" value="UniProtKB-UniRule"/>
</dbReference>
<dbReference type="GO" id="GO:0006260">
    <property type="term" value="P:DNA replication"/>
    <property type="evidence" value="ECO:0007669"/>
    <property type="project" value="UniProtKB-UniRule"/>
</dbReference>
<dbReference type="GO" id="GO:0045892">
    <property type="term" value="P:negative regulation of DNA-templated transcription"/>
    <property type="evidence" value="ECO:0007669"/>
    <property type="project" value="UniProtKB-UniRule"/>
</dbReference>
<dbReference type="GO" id="GO:0006508">
    <property type="term" value="P:proteolysis"/>
    <property type="evidence" value="ECO:0007669"/>
    <property type="project" value="InterPro"/>
</dbReference>
<dbReference type="GO" id="GO:0009432">
    <property type="term" value="P:SOS response"/>
    <property type="evidence" value="ECO:0007669"/>
    <property type="project" value="UniProtKB-UniRule"/>
</dbReference>
<dbReference type="CDD" id="cd00090">
    <property type="entry name" value="HTH_ARSR"/>
    <property type="match status" value="1"/>
</dbReference>
<dbReference type="CDD" id="cd06529">
    <property type="entry name" value="S24_LexA-like"/>
    <property type="match status" value="1"/>
</dbReference>
<dbReference type="FunFam" id="1.10.10.10:FF:000009">
    <property type="entry name" value="LexA repressor"/>
    <property type="match status" value="1"/>
</dbReference>
<dbReference type="FunFam" id="2.10.109.10:FF:000001">
    <property type="entry name" value="LexA repressor"/>
    <property type="match status" value="1"/>
</dbReference>
<dbReference type="Gene3D" id="2.10.109.10">
    <property type="entry name" value="Umud Fragment, subunit A"/>
    <property type="match status" value="1"/>
</dbReference>
<dbReference type="Gene3D" id="1.10.10.10">
    <property type="entry name" value="Winged helix-like DNA-binding domain superfamily/Winged helix DNA-binding domain"/>
    <property type="match status" value="1"/>
</dbReference>
<dbReference type="HAMAP" id="MF_00015">
    <property type="entry name" value="LexA"/>
    <property type="match status" value="1"/>
</dbReference>
<dbReference type="InterPro" id="IPR011991">
    <property type="entry name" value="ArsR-like_HTH"/>
</dbReference>
<dbReference type="InterPro" id="IPR006200">
    <property type="entry name" value="LexA"/>
</dbReference>
<dbReference type="InterPro" id="IPR039418">
    <property type="entry name" value="LexA-like"/>
</dbReference>
<dbReference type="InterPro" id="IPR036286">
    <property type="entry name" value="LexA/Signal_pep-like_sf"/>
</dbReference>
<dbReference type="InterPro" id="IPR006199">
    <property type="entry name" value="LexA_DNA-bd_dom"/>
</dbReference>
<dbReference type="InterPro" id="IPR050077">
    <property type="entry name" value="LexA_repressor"/>
</dbReference>
<dbReference type="InterPro" id="IPR006197">
    <property type="entry name" value="Peptidase_S24_LexA"/>
</dbReference>
<dbReference type="InterPro" id="IPR015927">
    <property type="entry name" value="Peptidase_S24_S26A/B/C"/>
</dbReference>
<dbReference type="InterPro" id="IPR036388">
    <property type="entry name" value="WH-like_DNA-bd_sf"/>
</dbReference>
<dbReference type="InterPro" id="IPR036390">
    <property type="entry name" value="WH_DNA-bd_sf"/>
</dbReference>
<dbReference type="NCBIfam" id="TIGR00498">
    <property type="entry name" value="lexA"/>
    <property type="match status" value="1"/>
</dbReference>
<dbReference type="PANTHER" id="PTHR33516">
    <property type="entry name" value="LEXA REPRESSOR"/>
    <property type="match status" value="1"/>
</dbReference>
<dbReference type="PANTHER" id="PTHR33516:SF2">
    <property type="entry name" value="LEXA REPRESSOR-RELATED"/>
    <property type="match status" value="1"/>
</dbReference>
<dbReference type="Pfam" id="PF01726">
    <property type="entry name" value="LexA_DNA_bind"/>
    <property type="match status" value="1"/>
</dbReference>
<dbReference type="Pfam" id="PF00717">
    <property type="entry name" value="Peptidase_S24"/>
    <property type="match status" value="1"/>
</dbReference>
<dbReference type="PRINTS" id="PR00726">
    <property type="entry name" value="LEXASERPTASE"/>
</dbReference>
<dbReference type="SUPFAM" id="SSF51306">
    <property type="entry name" value="LexA/Signal peptidase"/>
    <property type="match status" value="1"/>
</dbReference>
<dbReference type="SUPFAM" id="SSF46785">
    <property type="entry name" value="Winged helix' DNA-binding domain"/>
    <property type="match status" value="1"/>
</dbReference>
<accession>Q65J42</accession>
<accession>Q62UJ9</accession>